<reference key="1">
    <citation type="journal article" date="1996" name="DNA Res.">
        <title>Sequence analysis of the genome of the unicellular cyanobacterium Synechocystis sp. strain PCC6803. II. Sequence determination of the entire genome and assignment of potential protein-coding regions.</title>
        <authorList>
            <person name="Kaneko T."/>
            <person name="Sato S."/>
            <person name="Kotani H."/>
            <person name="Tanaka A."/>
            <person name="Asamizu E."/>
            <person name="Nakamura Y."/>
            <person name="Miyajima N."/>
            <person name="Hirosawa M."/>
            <person name="Sugiura M."/>
            <person name="Sasamoto S."/>
            <person name="Kimura T."/>
            <person name="Hosouchi T."/>
            <person name="Matsuno A."/>
            <person name="Muraki A."/>
            <person name="Nakazaki N."/>
            <person name="Naruo K."/>
            <person name="Okumura S."/>
            <person name="Shimpo S."/>
            <person name="Takeuchi C."/>
            <person name="Wada T."/>
            <person name="Watanabe A."/>
            <person name="Yamada M."/>
            <person name="Yasuda M."/>
            <person name="Tabata S."/>
        </authorList>
    </citation>
    <scope>NUCLEOTIDE SEQUENCE [LARGE SCALE GENOMIC DNA]</scope>
    <source>
        <strain>ATCC 27184 / PCC 6803 / Kazusa</strain>
    </source>
</reference>
<comment type="similarity">
    <text evidence="1">Belongs to the bacterial ribosomal protein bL36 family.</text>
</comment>
<proteinExistence type="inferred from homology"/>
<evidence type="ECO:0000255" key="1">
    <source>
        <dbReference type="HAMAP-Rule" id="MF_00251"/>
    </source>
</evidence>
<evidence type="ECO:0000305" key="2"/>
<feature type="chain" id="PRO_0000126281" description="Large ribosomal subunit protein bL36">
    <location>
        <begin position="1"/>
        <end position="38"/>
    </location>
</feature>
<dbReference type="EMBL" id="BA000022">
    <property type="protein sequence ID" value="BAA17328.1"/>
    <property type="molecule type" value="Genomic_DNA"/>
</dbReference>
<dbReference type="PIR" id="S77481">
    <property type="entry name" value="S77481"/>
</dbReference>
<dbReference type="SMR" id="P73300"/>
<dbReference type="FunCoup" id="P73300">
    <property type="interactions" value="118"/>
</dbReference>
<dbReference type="IntAct" id="P73300">
    <property type="interactions" value="2"/>
</dbReference>
<dbReference type="STRING" id="1148.gene:10498191"/>
<dbReference type="PaxDb" id="1148-1652406"/>
<dbReference type="EnsemblBacteria" id="BAA17328">
    <property type="protein sequence ID" value="BAA17328"/>
    <property type="gene ID" value="BAA17328"/>
</dbReference>
<dbReference type="KEGG" id="syn:sml0006"/>
<dbReference type="eggNOG" id="COG0257">
    <property type="taxonomic scope" value="Bacteria"/>
</dbReference>
<dbReference type="InParanoid" id="P73300"/>
<dbReference type="PhylomeDB" id="P73300"/>
<dbReference type="Proteomes" id="UP000001425">
    <property type="component" value="Chromosome"/>
</dbReference>
<dbReference type="GO" id="GO:0005737">
    <property type="term" value="C:cytoplasm"/>
    <property type="evidence" value="ECO:0007669"/>
    <property type="project" value="UniProtKB-ARBA"/>
</dbReference>
<dbReference type="GO" id="GO:1990904">
    <property type="term" value="C:ribonucleoprotein complex"/>
    <property type="evidence" value="ECO:0007669"/>
    <property type="project" value="UniProtKB-KW"/>
</dbReference>
<dbReference type="GO" id="GO:0005840">
    <property type="term" value="C:ribosome"/>
    <property type="evidence" value="ECO:0007669"/>
    <property type="project" value="UniProtKB-KW"/>
</dbReference>
<dbReference type="GO" id="GO:0003735">
    <property type="term" value="F:structural constituent of ribosome"/>
    <property type="evidence" value="ECO:0007669"/>
    <property type="project" value="InterPro"/>
</dbReference>
<dbReference type="GO" id="GO:0006412">
    <property type="term" value="P:translation"/>
    <property type="evidence" value="ECO:0007669"/>
    <property type="project" value="UniProtKB-UniRule"/>
</dbReference>
<dbReference type="HAMAP" id="MF_00251">
    <property type="entry name" value="Ribosomal_bL36"/>
    <property type="match status" value="1"/>
</dbReference>
<dbReference type="InterPro" id="IPR000473">
    <property type="entry name" value="Ribosomal_bL36"/>
</dbReference>
<dbReference type="InterPro" id="IPR035977">
    <property type="entry name" value="Ribosomal_bL36_sp"/>
</dbReference>
<dbReference type="NCBIfam" id="TIGR01022">
    <property type="entry name" value="rpmJ_bact"/>
    <property type="match status" value="1"/>
</dbReference>
<dbReference type="PANTHER" id="PTHR42888">
    <property type="entry name" value="50S RIBOSOMAL PROTEIN L36, CHLOROPLASTIC"/>
    <property type="match status" value="1"/>
</dbReference>
<dbReference type="PANTHER" id="PTHR42888:SF1">
    <property type="entry name" value="LARGE RIBOSOMAL SUBUNIT PROTEIN BL36C"/>
    <property type="match status" value="1"/>
</dbReference>
<dbReference type="Pfam" id="PF00444">
    <property type="entry name" value="Ribosomal_L36"/>
    <property type="match status" value="1"/>
</dbReference>
<dbReference type="SUPFAM" id="SSF57840">
    <property type="entry name" value="Ribosomal protein L36"/>
    <property type="match status" value="1"/>
</dbReference>
<dbReference type="PROSITE" id="PS00828">
    <property type="entry name" value="RIBOSOMAL_L36"/>
    <property type="match status" value="1"/>
</dbReference>
<name>RL36_SYNY3</name>
<gene>
    <name evidence="1" type="primary">rpmJ</name>
    <name type="synonym">rpl36</name>
    <name type="ordered locus">sml0006</name>
</gene>
<organism>
    <name type="scientific">Synechocystis sp. (strain ATCC 27184 / PCC 6803 / Kazusa)</name>
    <dbReference type="NCBI Taxonomy" id="1111708"/>
    <lineage>
        <taxon>Bacteria</taxon>
        <taxon>Bacillati</taxon>
        <taxon>Cyanobacteriota</taxon>
        <taxon>Cyanophyceae</taxon>
        <taxon>Synechococcales</taxon>
        <taxon>Merismopediaceae</taxon>
        <taxon>Synechocystis</taxon>
    </lineage>
</organism>
<accession>P73300</accession>
<keyword id="KW-1185">Reference proteome</keyword>
<keyword id="KW-0687">Ribonucleoprotein</keyword>
<keyword id="KW-0689">Ribosomal protein</keyword>
<protein>
    <recommendedName>
        <fullName evidence="1">Large ribosomal subunit protein bL36</fullName>
    </recommendedName>
    <alternativeName>
        <fullName evidence="2">50S ribosomal protein L36</fullName>
    </alternativeName>
</protein>
<sequence length="38" mass="4455">MKVRASVKKMCDKCRVIRRRGRVMVICSANPKHKQRQG</sequence>